<dbReference type="EMBL" id="CP000884">
    <property type="protein sequence ID" value="ABX38105.1"/>
    <property type="molecule type" value="Genomic_DNA"/>
</dbReference>
<dbReference type="RefSeq" id="WP_012207274.1">
    <property type="nucleotide sequence ID" value="NC_010002.1"/>
</dbReference>
<dbReference type="SMR" id="A9BP60"/>
<dbReference type="STRING" id="398578.Daci_5476"/>
<dbReference type="GeneID" id="24119565"/>
<dbReference type="KEGG" id="dac:Daci_5476"/>
<dbReference type="eggNOG" id="COG0216">
    <property type="taxonomic scope" value="Bacteria"/>
</dbReference>
<dbReference type="HOGENOM" id="CLU_036856_0_1_4"/>
<dbReference type="Proteomes" id="UP000000784">
    <property type="component" value="Chromosome"/>
</dbReference>
<dbReference type="GO" id="GO:0005737">
    <property type="term" value="C:cytoplasm"/>
    <property type="evidence" value="ECO:0007669"/>
    <property type="project" value="UniProtKB-SubCell"/>
</dbReference>
<dbReference type="GO" id="GO:0016149">
    <property type="term" value="F:translation release factor activity, codon specific"/>
    <property type="evidence" value="ECO:0007669"/>
    <property type="project" value="UniProtKB-UniRule"/>
</dbReference>
<dbReference type="FunFam" id="3.30.160.20:FF:000004">
    <property type="entry name" value="Peptide chain release factor 1"/>
    <property type="match status" value="1"/>
</dbReference>
<dbReference type="FunFam" id="3.30.70.1660:FF:000002">
    <property type="entry name" value="Peptide chain release factor 1"/>
    <property type="match status" value="1"/>
</dbReference>
<dbReference type="FunFam" id="3.30.70.1660:FF:000004">
    <property type="entry name" value="Peptide chain release factor 1"/>
    <property type="match status" value="1"/>
</dbReference>
<dbReference type="Gene3D" id="3.30.160.20">
    <property type="match status" value="1"/>
</dbReference>
<dbReference type="Gene3D" id="3.30.70.1660">
    <property type="match status" value="1"/>
</dbReference>
<dbReference type="Gene3D" id="6.10.140.1950">
    <property type="match status" value="1"/>
</dbReference>
<dbReference type="HAMAP" id="MF_00093">
    <property type="entry name" value="Rel_fac_1"/>
    <property type="match status" value="1"/>
</dbReference>
<dbReference type="InterPro" id="IPR005139">
    <property type="entry name" value="PCRF"/>
</dbReference>
<dbReference type="InterPro" id="IPR000352">
    <property type="entry name" value="Pep_chain_release_fac_I"/>
</dbReference>
<dbReference type="InterPro" id="IPR045853">
    <property type="entry name" value="Pep_chain_release_fac_I_sf"/>
</dbReference>
<dbReference type="InterPro" id="IPR050057">
    <property type="entry name" value="Prokaryotic/Mito_RF"/>
</dbReference>
<dbReference type="InterPro" id="IPR004373">
    <property type="entry name" value="RF-1"/>
</dbReference>
<dbReference type="NCBIfam" id="TIGR00019">
    <property type="entry name" value="prfA"/>
    <property type="match status" value="1"/>
</dbReference>
<dbReference type="NCBIfam" id="NF001859">
    <property type="entry name" value="PRK00591.1"/>
    <property type="match status" value="1"/>
</dbReference>
<dbReference type="PANTHER" id="PTHR43804">
    <property type="entry name" value="LD18447P"/>
    <property type="match status" value="1"/>
</dbReference>
<dbReference type="PANTHER" id="PTHR43804:SF7">
    <property type="entry name" value="LD18447P"/>
    <property type="match status" value="1"/>
</dbReference>
<dbReference type="Pfam" id="PF03462">
    <property type="entry name" value="PCRF"/>
    <property type="match status" value="1"/>
</dbReference>
<dbReference type="Pfam" id="PF00472">
    <property type="entry name" value="RF-1"/>
    <property type="match status" value="1"/>
</dbReference>
<dbReference type="SMART" id="SM00937">
    <property type="entry name" value="PCRF"/>
    <property type="match status" value="1"/>
</dbReference>
<dbReference type="SUPFAM" id="SSF75620">
    <property type="entry name" value="Release factor"/>
    <property type="match status" value="1"/>
</dbReference>
<dbReference type="PROSITE" id="PS00745">
    <property type="entry name" value="RF_PROK_I"/>
    <property type="match status" value="1"/>
</dbReference>
<feature type="chain" id="PRO_1000093448" description="Peptide chain release factor 1">
    <location>
        <begin position="1"/>
        <end position="360"/>
    </location>
</feature>
<feature type="modified residue" description="N5-methylglutamine" evidence="1">
    <location>
        <position position="235"/>
    </location>
</feature>
<evidence type="ECO:0000255" key="1">
    <source>
        <dbReference type="HAMAP-Rule" id="MF_00093"/>
    </source>
</evidence>
<name>RF1_DELAS</name>
<reference key="1">
    <citation type="submission" date="2007-11" db="EMBL/GenBank/DDBJ databases">
        <title>Complete sequence of Delftia acidovorans DSM 14801 / SPH-1.</title>
        <authorList>
            <person name="Copeland A."/>
            <person name="Lucas S."/>
            <person name="Lapidus A."/>
            <person name="Barry K."/>
            <person name="Glavina del Rio T."/>
            <person name="Dalin E."/>
            <person name="Tice H."/>
            <person name="Pitluck S."/>
            <person name="Lowry S."/>
            <person name="Clum A."/>
            <person name="Schmutz J."/>
            <person name="Larimer F."/>
            <person name="Land M."/>
            <person name="Hauser L."/>
            <person name="Kyrpides N."/>
            <person name="Kim E."/>
            <person name="Schleheck D."/>
            <person name="Richardson P."/>
        </authorList>
    </citation>
    <scope>NUCLEOTIDE SEQUENCE [LARGE SCALE GENOMIC DNA]</scope>
    <source>
        <strain>DSM 14801 / SPH-1</strain>
    </source>
</reference>
<accession>A9BP60</accession>
<sequence length="360" mass="40150">MQDFLRQQLERYAQRLEELNFLLSREDIMGDMKQYRAISREHADVTAIAGRYARHRQREADLAAAQDMLSDPDMADMAQEEIASAEAELVQLEDELQRLLLPKDPDDARNAYLEIRAGTGGDESALFAGDLARMYTRHCDAVGWKVEIMSANESELGGYKEVVLRVEGTDVYGRLRFESGGHRVQRVPATETQGRIHTSACTVAVMPEPDETQAITLNPADLRIDTFRASGAGGQHINKTDSAVRVVHLPTGIVAECQDGRSQHSNKAKALQVLQARLQEKERSEREAKEAALRKGLIGSGDRSDRIRTYNFPQGRLTDHRINLTIYKLLAVMEGDLGDVLDALQAAREAELLAELQVNN</sequence>
<organism>
    <name type="scientific">Delftia acidovorans (strain DSM 14801 / SPH-1)</name>
    <dbReference type="NCBI Taxonomy" id="398578"/>
    <lineage>
        <taxon>Bacteria</taxon>
        <taxon>Pseudomonadati</taxon>
        <taxon>Pseudomonadota</taxon>
        <taxon>Betaproteobacteria</taxon>
        <taxon>Burkholderiales</taxon>
        <taxon>Comamonadaceae</taxon>
        <taxon>Delftia</taxon>
    </lineage>
</organism>
<proteinExistence type="inferred from homology"/>
<keyword id="KW-0963">Cytoplasm</keyword>
<keyword id="KW-0488">Methylation</keyword>
<keyword id="KW-0648">Protein biosynthesis</keyword>
<keyword id="KW-1185">Reference proteome</keyword>
<gene>
    <name evidence="1" type="primary">prfA</name>
    <name type="ordered locus">Daci_5476</name>
</gene>
<protein>
    <recommendedName>
        <fullName evidence="1">Peptide chain release factor 1</fullName>
        <shortName evidence="1">RF-1</shortName>
    </recommendedName>
</protein>
<comment type="function">
    <text evidence="1">Peptide chain release factor 1 directs the termination of translation in response to the peptide chain termination codons UAG and UAA.</text>
</comment>
<comment type="subcellular location">
    <subcellularLocation>
        <location evidence="1">Cytoplasm</location>
    </subcellularLocation>
</comment>
<comment type="PTM">
    <text evidence="1">Methylated by PrmC. Methylation increases the termination efficiency of RF1.</text>
</comment>
<comment type="similarity">
    <text evidence="1">Belongs to the prokaryotic/mitochondrial release factor family.</text>
</comment>